<dbReference type="EMBL" id="AE014299">
    <property type="protein sequence ID" value="AAN53384.1"/>
    <property type="molecule type" value="Genomic_DNA"/>
</dbReference>
<dbReference type="RefSeq" id="NP_715939.1">
    <property type="nucleotide sequence ID" value="NC_004347.2"/>
</dbReference>
<dbReference type="RefSeq" id="WP_011070671.1">
    <property type="nucleotide sequence ID" value="NC_004347.2"/>
</dbReference>
<dbReference type="SMR" id="Q8EK07"/>
<dbReference type="STRING" id="211586.SO_0299"/>
<dbReference type="PaxDb" id="211586-SO_0299"/>
<dbReference type="KEGG" id="son:SO_0299"/>
<dbReference type="PATRIC" id="fig|211586.12.peg.291"/>
<dbReference type="eggNOG" id="COG0792">
    <property type="taxonomic scope" value="Bacteria"/>
</dbReference>
<dbReference type="HOGENOM" id="CLU_115353_1_0_6"/>
<dbReference type="OrthoDB" id="9794876at2"/>
<dbReference type="PhylomeDB" id="Q8EK07"/>
<dbReference type="BioCyc" id="SONE211586:G1GMP-289-MONOMER"/>
<dbReference type="Proteomes" id="UP000008186">
    <property type="component" value="Chromosome"/>
</dbReference>
<dbReference type="GO" id="GO:0003676">
    <property type="term" value="F:nucleic acid binding"/>
    <property type="evidence" value="ECO:0007669"/>
    <property type="project" value="InterPro"/>
</dbReference>
<dbReference type="CDD" id="cd20736">
    <property type="entry name" value="PoNe_Nuclease"/>
    <property type="match status" value="1"/>
</dbReference>
<dbReference type="Gene3D" id="3.40.1350.10">
    <property type="match status" value="1"/>
</dbReference>
<dbReference type="HAMAP" id="MF_00048">
    <property type="entry name" value="UPF0102"/>
    <property type="match status" value="1"/>
</dbReference>
<dbReference type="InterPro" id="IPR011335">
    <property type="entry name" value="Restrct_endonuc-II-like"/>
</dbReference>
<dbReference type="InterPro" id="IPR011856">
    <property type="entry name" value="tRNA_endonuc-like_dom_sf"/>
</dbReference>
<dbReference type="InterPro" id="IPR003509">
    <property type="entry name" value="UPF0102_YraN-like"/>
</dbReference>
<dbReference type="NCBIfam" id="NF009150">
    <property type="entry name" value="PRK12497.1-3"/>
    <property type="match status" value="1"/>
</dbReference>
<dbReference type="NCBIfam" id="TIGR00252">
    <property type="entry name" value="YraN family protein"/>
    <property type="match status" value="1"/>
</dbReference>
<dbReference type="PANTHER" id="PTHR34039">
    <property type="entry name" value="UPF0102 PROTEIN YRAN"/>
    <property type="match status" value="1"/>
</dbReference>
<dbReference type="PANTHER" id="PTHR34039:SF1">
    <property type="entry name" value="UPF0102 PROTEIN YRAN"/>
    <property type="match status" value="1"/>
</dbReference>
<dbReference type="Pfam" id="PF02021">
    <property type="entry name" value="UPF0102"/>
    <property type="match status" value="1"/>
</dbReference>
<dbReference type="SUPFAM" id="SSF52980">
    <property type="entry name" value="Restriction endonuclease-like"/>
    <property type="match status" value="1"/>
</dbReference>
<keyword id="KW-1185">Reference proteome</keyword>
<evidence type="ECO:0000255" key="1">
    <source>
        <dbReference type="HAMAP-Rule" id="MF_00048"/>
    </source>
</evidence>
<accession>Q8EK07</accession>
<feature type="chain" id="PRO_0000167379" description="UPF0102 protein SO_0299">
    <location>
        <begin position="1"/>
        <end position="108"/>
    </location>
</feature>
<protein>
    <recommendedName>
        <fullName evidence="1">UPF0102 protein SO_0299</fullName>
    </recommendedName>
</protein>
<organism>
    <name type="scientific">Shewanella oneidensis (strain ATCC 700550 / JCM 31522 / CIP 106686 / LMG 19005 / NCIMB 14063 / MR-1)</name>
    <dbReference type="NCBI Taxonomy" id="211586"/>
    <lineage>
        <taxon>Bacteria</taxon>
        <taxon>Pseudomonadati</taxon>
        <taxon>Pseudomonadota</taxon>
        <taxon>Gammaproteobacteria</taxon>
        <taxon>Alteromonadales</taxon>
        <taxon>Shewanellaceae</taxon>
        <taxon>Shewanella</taxon>
    </lineage>
</organism>
<proteinExistence type="inferred from homology"/>
<name>Y299_SHEON</name>
<comment type="similarity">
    <text evidence="1">Belongs to the UPF0102 family.</text>
</comment>
<sequence>MTLGQQAESLAQSYLEQQGLSFVERNVRYPFGEIDLVMRHKKYWVFVEVKYRSANQFGGAIQALSKAQIGRIRMAASHYLQSHKLDVPCRFDVVAIEDTQIQWLVDAF</sequence>
<reference key="1">
    <citation type="journal article" date="2002" name="Nat. Biotechnol.">
        <title>Genome sequence of the dissimilatory metal ion-reducing bacterium Shewanella oneidensis.</title>
        <authorList>
            <person name="Heidelberg J.F."/>
            <person name="Paulsen I.T."/>
            <person name="Nelson K.E."/>
            <person name="Gaidos E.J."/>
            <person name="Nelson W.C."/>
            <person name="Read T.D."/>
            <person name="Eisen J.A."/>
            <person name="Seshadri R."/>
            <person name="Ward N.L."/>
            <person name="Methe B.A."/>
            <person name="Clayton R.A."/>
            <person name="Meyer T."/>
            <person name="Tsapin A."/>
            <person name="Scott J."/>
            <person name="Beanan M.J."/>
            <person name="Brinkac L.M."/>
            <person name="Daugherty S.C."/>
            <person name="DeBoy R.T."/>
            <person name="Dodson R.J."/>
            <person name="Durkin A.S."/>
            <person name="Haft D.H."/>
            <person name="Kolonay J.F."/>
            <person name="Madupu R."/>
            <person name="Peterson J.D."/>
            <person name="Umayam L.A."/>
            <person name="White O."/>
            <person name="Wolf A.M."/>
            <person name="Vamathevan J.J."/>
            <person name="Weidman J.F."/>
            <person name="Impraim M."/>
            <person name="Lee K."/>
            <person name="Berry K.J."/>
            <person name="Lee C."/>
            <person name="Mueller J."/>
            <person name="Khouri H.M."/>
            <person name="Gill J."/>
            <person name="Utterback T.R."/>
            <person name="McDonald L.A."/>
            <person name="Feldblyum T.V."/>
            <person name="Smith H.O."/>
            <person name="Venter J.C."/>
            <person name="Nealson K.H."/>
            <person name="Fraser C.M."/>
        </authorList>
    </citation>
    <scope>NUCLEOTIDE SEQUENCE [LARGE SCALE GENOMIC DNA]</scope>
    <source>
        <strain>ATCC 700550 / JCM 31522 / CIP 106686 / LMG 19005 / NCIMB 14063 / MR-1</strain>
    </source>
</reference>
<gene>
    <name type="ordered locus">SO_0299</name>
</gene>